<comment type="function">
    <text evidence="1">DNA-dependent RNA polymerase catalyzes the transcription of DNA into RNA using the four ribonucleoside triphosphates as substrates.</text>
</comment>
<comment type="catalytic activity">
    <reaction evidence="1">
        <text>RNA(n) + a ribonucleoside 5'-triphosphate = RNA(n+1) + diphosphate</text>
        <dbReference type="Rhea" id="RHEA:21248"/>
        <dbReference type="Rhea" id="RHEA-COMP:14527"/>
        <dbReference type="Rhea" id="RHEA-COMP:17342"/>
        <dbReference type="ChEBI" id="CHEBI:33019"/>
        <dbReference type="ChEBI" id="CHEBI:61557"/>
        <dbReference type="ChEBI" id="CHEBI:140395"/>
        <dbReference type="EC" id="2.7.7.6"/>
    </reaction>
</comment>
<comment type="subunit">
    <text evidence="1">In plastids the minimal PEP RNA polymerase catalytic core is composed of four subunits: alpha, beta, beta', and beta''. When a (nuclear-encoded) sigma factor is associated with the core the holoenzyme is formed, which can initiate transcription.</text>
</comment>
<comment type="subcellular location">
    <subcellularLocation>
        <location>Plastid</location>
        <location>Chloroplast</location>
    </subcellularLocation>
</comment>
<comment type="domain">
    <text evidence="1">The N-terminal domain is essential for RNAP assembly and basal transcription, whereas the C-terminal domain is involved in interaction with transcriptional regulators and with upstream promoter elements.</text>
</comment>
<comment type="similarity">
    <text evidence="1">Belongs to the RNA polymerase alpha chain family.</text>
</comment>
<name>RPOA_PANGI</name>
<proteinExistence type="inferred from homology"/>
<protein>
    <recommendedName>
        <fullName evidence="1">DNA-directed RNA polymerase subunit alpha</fullName>
        <shortName evidence="1">PEP</shortName>
        <ecNumber evidence="1">2.7.7.6</ecNumber>
    </recommendedName>
    <alternativeName>
        <fullName evidence="1">Plastid-encoded RNA polymerase subunit alpha</fullName>
        <shortName evidence="1">RNA polymerase subunit alpha</shortName>
    </alternativeName>
</protein>
<keyword id="KW-0150">Chloroplast</keyword>
<keyword id="KW-0240">DNA-directed RNA polymerase</keyword>
<keyword id="KW-0548">Nucleotidyltransferase</keyword>
<keyword id="KW-0934">Plastid</keyword>
<keyword id="KW-0804">Transcription</keyword>
<keyword id="KW-0808">Transferase</keyword>
<organism>
    <name type="scientific">Panax ginseng</name>
    <name type="common">Korean ginseng</name>
    <dbReference type="NCBI Taxonomy" id="4054"/>
    <lineage>
        <taxon>Eukaryota</taxon>
        <taxon>Viridiplantae</taxon>
        <taxon>Streptophyta</taxon>
        <taxon>Embryophyta</taxon>
        <taxon>Tracheophyta</taxon>
        <taxon>Spermatophyta</taxon>
        <taxon>Magnoliopsida</taxon>
        <taxon>eudicotyledons</taxon>
        <taxon>Gunneridae</taxon>
        <taxon>Pentapetalae</taxon>
        <taxon>asterids</taxon>
        <taxon>campanulids</taxon>
        <taxon>Apiales</taxon>
        <taxon>Araliaceae</taxon>
        <taxon>Panax</taxon>
    </lineage>
</organism>
<dbReference type="EC" id="2.7.7.6" evidence="1"/>
<dbReference type="EMBL" id="AY582139">
    <property type="protein sequence ID" value="AAT98540.1"/>
    <property type="molecule type" value="Genomic_DNA"/>
</dbReference>
<dbReference type="RefSeq" id="YP_086997.1">
    <property type="nucleotide sequence ID" value="NC_006290.1"/>
</dbReference>
<dbReference type="SMR" id="Q68RX5"/>
<dbReference type="GeneID" id="3021459"/>
<dbReference type="GO" id="GO:0009507">
    <property type="term" value="C:chloroplast"/>
    <property type="evidence" value="ECO:0007669"/>
    <property type="project" value="UniProtKB-SubCell"/>
</dbReference>
<dbReference type="GO" id="GO:0000428">
    <property type="term" value="C:DNA-directed RNA polymerase complex"/>
    <property type="evidence" value="ECO:0007669"/>
    <property type="project" value="UniProtKB-KW"/>
</dbReference>
<dbReference type="GO" id="GO:0005739">
    <property type="term" value="C:mitochondrion"/>
    <property type="evidence" value="ECO:0007669"/>
    <property type="project" value="GOC"/>
</dbReference>
<dbReference type="GO" id="GO:0003677">
    <property type="term" value="F:DNA binding"/>
    <property type="evidence" value="ECO:0007669"/>
    <property type="project" value="UniProtKB-UniRule"/>
</dbReference>
<dbReference type="GO" id="GO:0003899">
    <property type="term" value="F:DNA-directed RNA polymerase activity"/>
    <property type="evidence" value="ECO:0007669"/>
    <property type="project" value="UniProtKB-UniRule"/>
</dbReference>
<dbReference type="GO" id="GO:0046983">
    <property type="term" value="F:protein dimerization activity"/>
    <property type="evidence" value="ECO:0007669"/>
    <property type="project" value="InterPro"/>
</dbReference>
<dbReference type="GO" id="GO:0006351">
    <property type="term" value="P:DNA-templated transcription"/>
    <property type="evidence" value="ECO:0007669"/>
    <property type="project" value="UniProtKB-UniRule"/>
</dbReference>
<dbReference type="CDD" id="cd06928">
    <property type="entry name" value="RNAP_alpha_NTD"/>
    <property type="match status" value="1"/>
</dbReference>
<dbReference type="FunFam" id="1.10.150.20:FF:000021">
    <property type="entry name" value="DNA-directed RNA polymerase subunit alpha"/>
    <property type="match status" value="1"/>
</dbReference>
<dbReference type="FunFam" id="2.170.120.12:FF:000001">
    <property type="entry name" value="DNA-directed RNA polymerase subunit alpha"/>
    <property type="match status" value="1"/>
</dbReference>
<dbReference type="FunFam" id="3.30.1360.10:FF:000039">
    <property type="entry name" value="DNA-directed RNA polymerase subunit alpha"/>
    <property type="match status" value="1"/>
</dbReference>
<dbReference type="Gene3D" id="1.10.150.20">
    <property type="entry name" value="5' to 3' exonuclease, C-terminal subdomain"/>
    <property type="match status" value="1"/>
</dbReference>
<dbReference type="Gene3D" id="2.170.120.12">
    <property type="entry name" value="DNA-directed RNA polymerase, insert domain"/>
    <property type="match status" value="1"/>
</dbReference>
<dbReference type="Gene3D" id="3.30.1360.10">
    <property type="entry name" value="RNA polymerase, RBP11-like subunit"/>
    <property type="match status" value="1"/>
</dbReference>
<dbReference type="HAMAP" id="MF_00059">
    <property type="entry name" value="RNApol_bact_RpoA"/>
    <property type="match status" value="1"/>
</dbReference>
<dbReference type="InterPro" id="IPR011262">
    <property type="entry name" value="DNA-dir_RNA_pol_insert"/>
</dbReference>
<dbReference type="InterPro" id="IPR011263">
    <property type="entry name" value="DNA-dir_RNA_pol_RpoA/D/Rpb3"/>
</dbReference>
<dbReference type="InterPro" id="IPR011773">
    <property type="entry name" value="DNA-dir_RpoA"/>
</dbReference>
<dbReference type="InterPro" id="IPR036603">
    <property type="entry name" value="RBP11-like"/>
</dbReference>
<dbReference type="InterPro" id="IPR011260">
    <property type="entry name" value="RNAP_asu_C"/>
</dbReference>
<dbReference type="InterPro" id="IPR036643">
    <property type="entry name" value="RNApol_insert_sf"/>
</dbReference>
<dbReference type="NCBIfam" id="TIGR02027">
    <property type="entry name" value="rpoA"/>
    <property type="match status" value="1"/>
</dbReference>
<dbReference type="Pfam" id="PF01000">
    <property type="entry name" value="RNA_pol_A_bac"/>
    <property type="match status" value="1"/>
</dbReference>
<dbReference type="Pfam" id="PF03118">
    <property type="entry name" value="RNA_pol_A_CTD"/>
    <property type="match status" value="1"/>
</dbReference>
<dbReference type="Pfam" id="PF01193">
    <property type="entry name" value="RNA_pol_L"/>
    <property type="match status" value="1"/>
</dbReference>
<dbReference type="SMART" id="SM00662">
    <property type="entry name" value="RPOLD"/>
    <property type="match status" value="1"/>
</dbReference>
<dbReference type="SUPFAM" id="SSF47789">
    <property type="entry name" value="C-terminal domain of RNA polymerase alpha subunit"/>
    <property type="match status" value="1"/>
</dbReference>
<dbReference type="SUPFAM" id="SSF56553">
    <property type="entry name" value="Insert subdomain of RNA polymerase alpha subunit"/>
    <property type="match status" value="1"/>
</dbReference>
<dbReference type="SUPFAM" id="SSF55257">
    <property type="entry name" value="RBP11-like subunits of RNA polymerase"/>
    <property type="match status" value="1"/>
</dbReference>
<reference key="1">
    <citation type="journal article" date="2004" name="DNA Res.">
        <title>Complete chloroplast genome sequence from Korea ginseng (Panax schinseng Nees) and comparative analysis of sequence evolution among 17 vascular plants.</title>
        <authorList>
            <person name="Kim K.-J."/>
            <person name="Lee H.-L."/>
        </authorList>
    </citation>
    <scope>NUCLEOTIDE SEQUENCE [LARGE SCALE GENOMIC DNA]</scope>
</reference>
<accession>Q68RX5</accession>
<gene>
    <name evidence="1" type="primary">rpoA</name>
    <name type="ORF">PSC0798</name>
</gene>
<evidence type="ECO:0000255" key="1">
    <source>
        <dbReference type="HAMAP-Rule" id="MF_00059"/>
    </source>
</evidence>
<sequence>MVQEKVRVSTRTLQWKCVEARADSKRLYYGRFILSPLMKGQADTIGIAMRRALLGEIEGTCITRAKSEKIPHEYSTLVGIQESVHEILMNLKEIILKSNLYGTCDASICIRGPGYVTAQDIISPPYVEIVDNTQHIASLAEPIDLCIGLQIERNRGYLIKTPNNNFQDGSYPIDAVFMPVRNANHSIHSYGNGNEKQEILFLEIWTNGSLTPKEALHQASRNLIDLFIPFLHTEEENLHLADNQHTVPLPPFTFHEKLTKLRKNKKKIALKSIFIDQSELPPRIYNCLIRSNIYTLLDLLNNSQEDLMKIEHFRIEDVKAILGILEKHFAIDLPKKLKIGFESLAQSIYSESG</sequence>
<geneLocation type="chloroplast"/>
<feature type="chain" id="PRO_0000175478" description="DNA-directed RNA polymerase subunit alpha">
    <location>
        <begin position="1"/>
        <end position="353"/>
    </location>
</feature>
<feature type="region of interest" description="Alpha N-terminal domain (alpha-NTD)" evidence="1">
    <location>
        <begin position="1"/>
        <end position="234"/>
    </location>
</feature>
<feature type="region of interest" description="Alpha C-terminal domain (alpha-CTD)" evidence="1">
    <location>
        <begin position="266"/>
        <end position="353"/>
    </location>
</feature>